<protein>
    <recommendedName>
        <fullName>UPF0355 protein SH2586</fullName>
    </recommendedName>
</protein>
<proteinExistence type="inferred from homology"/>
<reference key="1">
    <citation type="journal article" date="2005" name="J. Bacteriol.">
        <title>Whole-genome sequencing of Staphylococcus haemolyticus uncovers the extreme plasticity of its genome and the evolution of human-colonizing staphylococcal species.</title>
        <authorList>
            <person name="Takeuchi F."/>
            <person name="Watanabe S."/>
            <person name="Baba T."/>
            <person name="Yuzawa H."/>
            <person name="Ito T."/>
            <person name="Morimoto Y."/>
            <person name="Kuroda M."/>
            <person name="Cui L."/>
            <person name="Takahashi M."/>
            <person name="Ankai A."/>
            <person name="Baba S."/>
            <person name="Fukui S."/>
            <person name="Lee J.C."/>
            <person name="Hiramatsu K."/>
        </authorList>
    </citation>
    <scope>NUCLEOTIDE SEQUENCE [LARGE SCALE GENOMIC DNA]</scope>
    <source>
        <strain>JCSC1435</strain>
    </source>
</reference>
<organism>
    <name type="scientific">Staphylococcus haemolyticus (strain JCSC1435)</name>
    <dbReference type="NCBI Taxonomy" id="279808"/>
    <lineage>
        <taxon>Bacteria</taxon>
        <taxon>Bacillati</taxon>
        <taxon>Bacillota</taxon>
        <taxon>Bacilli</taxon>
        <taxon>Bacillales</taxon>
        <taxon>Staphylococcaceae</taxon>
        <taxon>Staphylococcus</taxon>
    </lineage>
</organism>
<sequence>MADFTVLDKQDEIYNVIDKKKAEGYSENELVVVSKSKLHLDNLHDSQVTLIATSGSFSDRMSKLLTGEDGEEAVLARYELSEEQTEKYKKDILDGKFLVIANKDNSSHDEVEENNSAYEEIDITHYANESKGPKS</sequence>
<gene>
    <name type="ordered locus">SH2586</name>
</gene>
<accession>Q4L382</accession>
<comment type="similarity">
    <text evidence="2">Belongs to the UPF0355 family.</text>
</comment>
<feature type="chain" id="PRO_0000220352" description="UPF0355 protein SH2586">
    <location>
        <begin position="1"/>
        <end position="135"/>
    </location>
</feature>
<feature type="region of interest" description="Disordered" evidence="1">
    <location>
        <begin position="105"/>
        <end position="135"/>
    </location>
</feature>
<dbReference type="EMBL" id="AP006716">
    <property type="protein sequence ID" value="BAE05895.1"/>
    <property type="molecule type" value="Genomic_DNA"/>
</dbReference>
<dbReference type="RefSeq" id="WP_011276832.1">
    <property type="nucleotide sequence ID" value="NC_007168.1"/>
</dbReference>
<dbReference type="KEGG" id="sha:SH2586"/>
<dbReference type="eggNOG" id="ENOG50334EH">
    <property type="taxonomic scope" value="Bacteria"/>
</dbReference>
<dbReference type="HOGENOM" id="CLU_152601_0_0_9"/>
<dbReference type="OrthoDB" id="2409186at2"/>
<dbReference type="Proteomes" id="UP000000543">
    <property type="component" value="Chromosome"/>
</dbReference>
<dbReference type="InterPro" id="IPR025889">
    <property type="entry name" value="GSP17M-like_dom"/>
</dbReference>
<dbReference type="Pfam" id="PF11181">
    <property type="entry name" value="YflT"/>
    <property type="match status" value="1"/>
</dbReference>
<evidence type="ECO:0000256" key="1">
    <source>
        <dbReference type="SAM" id="MobiDB-lite"/>
    </source>
</evidence>
<evidence type="ECO:0000305" key="2"/>
<name>UP355_STAHJ</name>